<keyword id="KW-0249">Electron transport</keyword>
<keyword id="KW-0349">Heme</keyword>
<keyword id="KW-0408">Iron</keyword>
<keyword id="KW-0472">Membrane</keyword>
<keyword id="KW-0479">Metal-binding</keyword>
<keyword id="KW-0496">Mitochondrion</keyword>
<keyword id="KW-0999">Mitochondrion inner membrane</keyword>
<keyword id="KW-1185">Reference proteome</keyword>
<keyword id="KW-0679">Respiratory chain</keyword>
<keyword id="KW-0812">Transmembrane</keyword>
<keyword id="KW-1133">Transmembrane helix</keyword>
<keyword id="KW-0813">Transport</keyword>
<keyword id="KW-0830">Ubiquinone</keyword>
<sequence length="379" mass="42819">MTNIRKTHPLMKILNNALIDLPTPSNISSWWNFGSLLGLCLITQILTGLFLAMHYTPDTSTAFSSVAHICRDVNYGWIIRYLHANGASMFFICLYIHIGRGLYYGSYMFQETWNIGVLLLLTIMATAFAGYVLPWGQMSFWGATVITNLLSAIPYIGSTLVEWIWGGFSVDKATLTRFFAFHFILPFIITALMIVHLLFLHETGSNNPTGIPSNMDMIPFHPYYTIKDILGALLFILTLLTLTLFLPDLLGDPDNYIPANPLSTPAHIKPEWYFLFAYAILRSIPNKLGGVLALLLSILILVFIPMLQTSKQRSMMFRPFSQLLFWTLIADLLTLTWVGGQPVEHPYIIVGQLASILYFLLILVLMPTASIIENKLLKW</sequence>
<name>CYB_PHOSS</name>
<gene>
    <name type="primary">MT-CYB</name>
    <name type="synonym">COB</name>
    <name type="synonym">CYTB</name>
    <name type="synonym">MTCYB</name>
</gene>
<accession>Q9TDN2</accession>
<proteinExistence type="inferred from homology"/>
<protein>
    <recommendedName>
        <fullName>Cytochrome b</fullName>
    </recommendedName>
    <alternativeName>
        <fullName>Complex III subunit 3</fullName>
    </alternativeName>
    <alternativeName>
        <fullName>Complex III subunit III</fullName>
    </alternativeName>
    <alternativeName>
        <fullName>Cytochrome b-c1 complex subunit 3</fullName>
    </alternativeName>
    <alternativeName>
        <fullName>Ubiquinol-cytochrome-c reductase complex cytochrome b subunit</fullName>
    </alternativeName>
</protein>
<geneLocation type="mitochondrion"/>
<reference key="1">
    <citation type="journal article" date="1999" name="Mar. Mamm. Sci.">
        <title>Phylogenetic relationships among the delphinid cetaceans based on full cytochrome b sequences.</title>
        <authorList>
            <person name="LeDuc R.G."/>
            <person name="Perrin W.F."/>
            <person name="Dizon A.E."/>
        </authorList>
    </citation>
    <scope>NUCLEOTIDE SEQUENCE [GENOMIC DNA]</scope>
</reference>
<comment type="function">
    <text evidence="2">Component of the ubiquinol-cytochrome c reductase complex (complex III or cytochrome b-c1 complex) that is part of the mitochondrial respiratory chain. The b-c1 complex mediates electron transfer from ubiquinol to cytochrome c. Contributes to the generation of a proton gradient across the mitochondrial membrane that is then used for ATP synthesis.</text>
</comment>
<comment type="cofactor">
    <cofactor evidence="2">
        <name>heme b</name>
        <dbReference type="ChEBI" id="CHEBI:60344"/>
    </cofactor>
    <text evidence="2">Binds 2 heme b groups non-covalently.</text>
</comment>
<comment type="subunit">
    <text evidence="2">The cytochrome bc1 complex contains 11 subunits: 3 respiratory subunits (MT-CYB, CYC1 and UQCRFS1), 2 core proteins (UQCRC1 and UQCRC2) and 6 low-molecular weight proteins (UQCRH/QCR6, UQCRB/QCR7, UQCRQ/QCR8, UQCR10/QCR9, UQCR11/QCR10 and a cleavage product of UQCRFS1). This cytochrome bc1 complex then forms a dimer.</text>
</comment>
<comment type="subcellular location">
    <subcellularLocation>
        <location evidence="2">Mitochondrion inner membrane</location>
        <topology evidence="2">Multi-pass membrane protein</topology>
    </subcellularLocation>
</comment>
<comment type="miscellaneous">
    <text evidence="1">Heme 1 (or BL or b562) is low-potential and absorbs at about 562 nm, and heme 2 (or BH or b566) is high-potential and absorbs at about 566 nm.</text>
</comment>
<comment type="similarity">
    <text evidence="3 4">Belongs to the cytochrome b family.</text>
</comment>
<comment type="caution">
    <text evidence="2">The full-length protein contains only eight transmembrane helices, not nine as predicted by bioinformatics tools.</text>
</comment>
<organism>
    <name type="scientific">Phocoena sinus</name>
    <name type="common">Vaquita</name>
    <dbReference type="NCBI Taxonomy" id="42100"/>
    <lineage>
        <taxon>Eukaryota</taxon>
        <taxon>Metazoa</taxon>
        <taxon>Chordata</taxon>
        <taxon>Craniata</taxon>
        <taxon>Vertebrata</taxon>
        <taxon>Euteleostomi</taxon>
        <taxon>Mammalia</taxon>
        <taxon>Eutheria</taxon>
        <taxon>Laurasiatheria</taxon>
        <taxon>Artiodactyla</taxon>
        <taxon>Whippomorpha</taxon>
        <taxon>Cetacea</taxon>
        <taxon>Odontoceti</taxon>
        <taxon>Phocoenidae</taxon>
        <taxon>Phocoena</taxon>
    </lineage>
</organism>
<feature type="chain" id="PRO_0000061392" description="Cytochrome b">
    <location>
        <begin position="1"/>
        <end position="379"/>
    </location>
</feature>
<feature type="transmembrane region" description="Helical" evidence="2">
    <location>
        <begin position="33"/>
        <end position="53"/>
    </location>
</feature>
<feature type="transmembrane region" description="Helical" evidence="2">
    <location>
        <begin position="77"/>
        <end position="98"/>
    </location>
</feature>
<feature type="transmembrane region" description="Helical" evidence="2">
    <location>
        <begin position="113"/>
        <end position="133"/>
    </location>
</feature>
<feature type="transmembrane region" description="Helical" evidence="2">
    <location>
        <begin position="178"/>
        <end position="198"/>
    </location>
</feature>
<feature type="transmembrane region" description="Helical" evidence="2">
    <location>
        <begin position="226"/>
        <end position="246"/>
    </location>
</feature>
<feature type="transmembrane region" description="Helical" evidence="2">
    <location>
        <begin position="288"/>
        <end position="308"/>
    </location>
</feature>
<feature type="transmembrane region" description="Helical" evidence="2">
    <location>
        <begin position="320"/>
        <end position="340"/>
    </location>
</feature>
<feature type="transmembrane region" description="Helical" evidence="2">
    <location>
        <begin position="347"/>
        <end position="367"/>
    </location>
</feature>
<feature type="binding site" description="axial binding residue" evidence="2">
    <location>
        <position position="83"/>
    </location>
    <ligand>
        <name>heme b</name>
        <dbReference type="ChEBI" id="CHEBI:60344"/>
        <label>b562</label>
    </ligand>
    <ligandPart>
        <name>Fe</name>
        <dbReference type="ChEBI" id="CHEBI:18248"/>
    </ligandPart>
</feature>
<feature type="binding site" description="axial binding residue" evidence="2">
    <location>
        <position position="97"/>
    </location>
    <ligand>
        <name>heme b</name>
        <dbReference type="ChEBI" id="CHEBI:60344"/>
        <label>b566</label>
    </ligand>
    <ligandPart>
        <name>Fe</name>
        <dbReference type="ChEBI" id="CHEBI:18248"/>
    </ligandPart>
</feature>
<feature type="binding site" description="axial binding residue" evidence="2">
    <location>
        <position position="182"/>
    </location>
    <ligand>
        <name>heme b</name>
        <dbReference type="ChEBI" id="CHEBI:60344"/>
        <label>b562</label>
    </ligand>
    <ligandPart>
        <name>Fe</name>
        <dbReference type="ChEBI" id="CHEBI:18248"/>
    </ligandPart>
</feature>
<feature type="binding site" description="axial binding residue" evidence="2">
    <location>
        <position position="196"/>
    </location>
    <ligand>
        <name>heme b</name>
        <dbReference type="ChEBI" id="CHEBI:60344"/>
        <label>b566</label>
    </ligand>
    <ligandPart>
        <name>Fe</name>
        <dbReference type="ChEBI" id="CHEBI:18248"/>
    </ligandPart>
</feature>
<feature type="binding site" evidence="2">
    <location>
        <position position="201"/>
    </location>
    <ligand>
        <name>a ubiquinone</name>
        <dbReference type="ChEBI" id="CHEBI:16389"/>
    </ligand>
</feature>
<evidence type="ECO:0000250" key="1"/>
<evidence type="ECO:0000250" key="2">
    <source>
        <dbReference type="UniProtKB" id="P00157"/>
    </source>
</evidence>
<evidence type="ECO:0000255" key="3">
    <source>
        <dbReference type="PROSITE-ProRule" id="PRU00967"/>
    </source>
</evidence>
<evidence type="ECO:0000255" key="4">
    <source>
        <dbReference type="PROSITE-ProRule" id="PRU00968"/>
    </source>
</evidence>
<dbReference type="EMBL" id="AF084051">
    <property type="protein sequence ID" value="AAD54428.1"/>
    <property type="molecule type" value="Genomic_DNA"/>
</dbReference>
<dbReference type="SMR" id="Q9TDN2"/>
<dbReference type="Proteomes" id="UP000694554">
    <property type="component" value="Unassembled WGS sequence"/>
</dbReference>
<dbReference type="GO" id="GO:0005743">
    <property type="term" value="C:mitochondrial inner membrane"/>
    <property type="evidence" value="ECO:0007669"/>
    <property type="project" value="UniProtKB-SubCell"/>
</dbReference>
<dbReference type="GO" id="GO:0045275">
    <property type="term" value="C:respiratory chain complex III"/>
    <property type="evidence" value="ECO:0007669"/>
    <property type="project" value="InterPro"/>
</dbReference>
<dbReference type="GO" id="GO:0046872">
    <property type="term" value="F:metal ion binding"/>
    <property type="evidence" value="ECO:0007669"/>
    <property type="project" value="UniProtKB-KW"/>
</dbReference>
<dbReference type="GO" id="GO:0008121">
    <property type="term" value="F:ubiquinol-cytochrome-c reductase activity"/>
    <property type="evidence" value="ECO:0007669"/>
    <property type="project" value="InterPro"/>
</dbReference>
<dbReference type="GO" id="GO:0006122">
    <property type="term" value="P:mitochondrial electron transport, ubiquinol to cytochrome c"/>
    <property type="evidence" value="ECO:0007669"/>
    <property type="project" value="TreeGrafter"/>
</dbReference>
<dbReference type="CDD" id="cd00290">
    <property type="entry name" value="cytochrome_b_C"/>
    <property type="match status" value="1"/>
</dbReference>
<dbReference type="CDD" id="cd00284">
    <property type="entry name" value="Cytochrome_b_N"/>
    <property type="match status" value="1"/>
</dbReference>
<dbReference type="FunFam" id="1.20.810.10:FF:000002">
    <property type="entry name" value="Cytochrome b"/>
    <property type="match status" value="1"/>
</dbReference>
<dbReference type="Gene3D" id="1.20.810.10">
    <property type="entry name" value="Cytochrome Bc1 Complex, Chain C"/>
    <property type="match status" value="1"/>
</dbReference>
<dbReference type="InterPro" id="IPR005798">
    <property type="entry name" value="Cyt_b/b6_C"/>
</dbReference>
<dbReference type="InterPro" id="IPR036150">
    <property type="entry name" value="Cyt_b/b6_C_sf"/>
</dbReference>
<dbReference type="InterPro" id="IPR005797">
    <property type="entry name" value="Cyt_b/b6_N"/>
</dbReference>
<dbReference type="InterPro" id="IPR027387">
    <property type="entry name" value="Cytb/b6-like_sf"/>
</dbReference>
<dbReference type="InterPro" id="IPR030689">
    <property type="entry name" value="Cytochrome_b"/>
</dbReference>
<dbReference type="InterPro" id="IPR048260">
    <property type="entry name" value="Cytochrome_b_C_euk/bac"/>
</dbReference>
<dbReference type="InterPro" id="IPR048259">
    <property type="entry name" value="Cytochrome_b_N_euk/bac"/>
</dbReference>
<dbReference type="InterPro" id="IPR016174">
    <property type="entry name" value="Di-haem_cyt_TM"/>
</dbReference>
<dbReference type="PANTHER" id="PTHR19271">
    <property type="entry name" value="CYTOCHROME B"/>
    <property type="match status" value="1"/>
</dbReference>
<dbReference type="PANTHER" id="PTHR19271:SF16">
    <property type="entry name" value="CYTOCHROME B"/>
    <property type="match status" value="1"/>
</dbReference>
<dbReference type="Pfam" id="PF00032">
    <property type="entry name" value="Cytochrom_B_C"/>
    <property type="match status" value="1"/>
</dbReference>
<dbReference type="Pfam" id="PF00033">
    <property type="entry name" value="Cytochrome_B"/>
    <property type="match status" value="1"/>
</dbReference>
<dbReference type="PIRSF" id="PIRSF038885">
    <property type="entry name" value="COB"/>
    <property type="match status" value="1"/>
</dbReference>
<dbReference type="SUPFAM" id="SSF81648">
    <property type="entry name" value="a domain/subunit of cytochrome bc1 complex (Ubiquinol-cytochrome c reductase)"/>
    <property type="match status" value="1"/>
</dbReference>
<dbReference type="SUPFAM" id="SSF81342">
    <property type="entry name" value="Transmembrane di-heme cytochromes"/>
    <property type="match status" value="1"/>
</dbReference>
<dbReference type="PROSITE" id="PS51003">
    <property type="entry name" value="CYTB_CTER"/>
    <property type="match status" value="1"/>
</dbReference>
<dbReference type="PROSITE" id="PS51002">
    <property type="entry name" value="CYTB_NTER"/>
    <property type="match status" value="1"/>
</dbReference>